<organism>
    <name type="scientific">Klebsiella pneumoniae (strain 342)</name>
    <dbReference type="NCBI Taxonomy" id="507522"/>
    <lineage>
        <taxon>Bacteria</taxon>
        <taxon>Pseudomonadati</taxon>
        <taxon>Pseudomonadota</taxon>
        <taxon>Gammaproteobacteria</taxon>
        <taxon>Enterobacterales</taxon>
        <taxon>Enterobacteriaceae</taxon>
        <taxon>Klebsiella/Raoultella group</taxon>
        <taxon>Klebsiella</taxon>
        <taxon>Klebsiella pneumoniae complex</taxon>
    </lineage>
</organism>
<accession>B5XP25</accession>
<gene>
    <name evidence="1" type="primary">rplY</name>
    <name type="ordered locus">KPK_1543</name>
</gene>
<proteinExistence type="inferred from homology"/>
<protein>
    <recommendedName>
        <fullName evidence="1">Large ribosomal subunit protein bL25</fullName>
    </recommendedName>
    <alternativeName>
        <fullName evidence="2">50S ribosomal protein L25</fullName>
    </alternativeName>
</protein>
<name>RL25_KLEP3</name>
<reference key="1">
    <citation type="journal article" date="2008" name="PLoS Genet.">
        <title>Complete genome sequence of the N2-fixing broad host range endophyte Klebsiella pneumoniae 342 and virulence predictions verified in mice.</title>
        <authorList>
            <person name="Fouts D.E."/>
            <person name="Tyler H.L."/>
            <person name="DeBoy R.T."/>
            <person name="Daugherty S."/>
            <person name="Ren Q."/>
            <person name="Badger J.H."/>
            <person name="Durkin A.S."/>
            <person name="Huot H."/>
            <person name="Shrivastava S."/>
            <person name="Kothari S."/>
            <person name="Dodson R.J."/>
            <person name="Mohamoud Y."/>
            <person name="Khouri H."/>
            <person name="Roesch L.F.W."/>
            <person name="Krogfelt K.A."/>
            <person name="Struve C."/>
            <person name="Triplett E.W."/>
            <person name="Methe B.A."/>
        </authorList>
    </citation>
    <scope>NUCLEOTIDE SEQUENCE [LARGE SCALE GENOMIC DNA]</scope>
    <source>
        <strain>342</strain>
    </source>
</reference>
<dbReference type="EMBL" id="CP000964">
    <property type="protein sequence ID" value="ACI08687.1"/>
    <property type="molecule type" value="Genomic_DNA"/>
</dbReference>
<dbReference type="SMR" id="B5XP25"/>
<dbReference type="KEGG" id="kpe:KPK_1543"/>
<dbReference type="HOGENOM" id="CLU_137946_0_0_6"/>
<dbReference type="Proteomes" id="UP000001734">
    <property type="component" value="Chromosome"/>
</dbReference>
<dbReference type="GO" id="GO:0022625">
    <property type="term" value="C:cytosolic large ribosomal subunit"/>
    <property type="evidence" value="ECO:0007669"/>
    <property type="project" value="TreeGrafter"/>
</dbReference>
<dbReference type="GO" id="GO:0008097">
    <property type="term" value="F:5S rRNA binding"/>
    <property type="evidence" value="ECO:0007669"/>
    <property type="project" value="InterPro"/>
</dbReference>
<dbReference type="GO" id="GO:0003735">
    <property type="term" value="F:structural constituent of ribosome"/>
    <property type="evidence" value="ECO:0007669"/>
    <property type="project" value="InterPro"/>
</dbReference>
<dbReference type="GO" id="GO:0006412">
    <property type="term" value="P:translation"/>
    <property type="evidence" value="ECO:0007669"/>
    <property type="project" value="UniProtKB-UniRule"/>
</dbReference>
<dbReference type="CDD" id="cd00495">
    <property type="entry name" value="Ribosomal_L25_TL5_CTC"/>
    <property type="match status" value="1"/>
</dbReference>
<dbReference type="FunFam" id="2.40.240.10:FF:000002">
    <property type="entry name" value="50S ribosomal protein L25"/>
    <property type="match status" value="1"/>
</dbReference>
<dbReference type="Gene3D" id="2.40.240.10">
    <property type="entry name" value="Ribosomal Protein L25, Chain P"/>
    <property type="match status" value="1"/>
</dbReference>
<dbReference type="HAMAP" id="MF_01336">
    <property type="entry name" value="Ribosomal_bL25"/>
    <property type="match status" value="1"/>
</dbReference>
<dbReference type="InterPro" id="IPR020056">
    <property type="entry name" value="Rbsml_bL25/Gln-tRNA_synth_N"/>
</dbReference>
<dbReference type="InterPro" id="IPR011035">
    <property type="entry name" value="Ribosomal_bL25/Gln-tRNA_synth"/>
</dbReference>
<dbReference type="InterPro" id="IPR020055">
    <property type="entry name" value="Ribosomal_bL25_short"/>
</dbReference>
<dbReference type="InterPro" id="IPR029751">
    <property type="entry name" value="Ribosomal_L25_dom"/>
</dbReference>
<dbReference type="InterPro" id="IPR020930">
    <property type="entry name" value="Ribosomal_uL5_bac-type"/>
</dbReference>
<dbReference type="NCBIfam" id="NF004612">
    <property type="entry name" value="PRK05943.1"/>
    <property type="match status" value="1"/>
</dbReference>
<dbReference type="PANTHER" id="PTHR33284">
    <property type="entry name" value="RIBOSOMAL PROTEIN L25/GLN-TRNA SYNTHETASE, ANTI-CODON-BINDING DOMAIN-CONTAINING PROTEIN"/>
    <property type="match status" value="1"/>
</dbReference>
<dbReference type="PANTHER" id="PTHR33284:SF1">
    <property type="entry name" value="RIBOSOMAL PROTEIN L25_GLN-TRNA SYNTHETASE, ANTI-CODON-BINDING DOMAIN-CONTAINING PROTEIN"/>
    <property type="match status" value="1"/>
</dbReference>
<dbReference type="Pfam" id="PF01386">
    <property type="entry name" value="Ribosomal_L25p"/>
    <property type="match status" value="1"/>
</dbReference>
<dbReference type="SUPFAM" id="SSF50715">
    <property type="entry name" value="Ribosomal protein L25-like"/>
    <property type="match status" value="1"/>
</dbReference>
<sequence>MFTINAEVRKEQGKGASRRLRAANKFPAIIYGGEAAPVAIELDHDKLWNMQDKAEFYGEVVTLVIDGKEEKVKVQAVQRHAFKPKLTHIDFVRA</sequence>
<keyword id="KW-0687">Ribonucleoprotein</keyword>
<keyword id="KW-0689">Ribosomal protein</keyword>
<keyword id="KW-0694">RNA-binding</keyword>
<keyword id="KW-0699">rRNA-binding</keyword>
<evidence type="ECO:0000255" key="1">
    <source>
        <dbReference type="HAMAP-Rule" id="MF_01336"/>
    </source>
</evidence>
<evidence type="ECO:0000305" key="2"/>
<comment type="function">
    <text evidence="1">This is one of the proteins that binds to the 5S RNA in the ribosome where it forms part of the central protuberance.</text>
</comment>
<comment type="subunit">
    <text evidence="1">Part of the 50S ribosomal subunit; part of the 5S rRNA/L5/L18/L25 subcomplex. Contacts the 5S rRNA. Binds to the 5S rRNA independently of L5 and L18.</text>
</comment>
<comment type="similarity">
    <text evidence="1">Belongs to the bacterial ribosomal protein bL25 family.</text>
</comment>
<feature type="chain" id="PRO_1000142587" description="Large ribosomal subunit protein bL25">
    <location>
        <begin position="1"/>
        <end position="94"/>
    </location>
</feature>